<name>EFP_PSE14</name>
<gene>
    <name evidence="1" type="primary">efp</name>
    <name type="ordered locus">PSPPH_3648</name>
</gene>
<organism>
    <name type="scientific">Pseudomonas savastanoi pv. phaseolicola (strain 1448A / Race 6)</name>
    <name type="common">Pseudomonas syringae pv. phaseolicola (strain 1448A / Race 6)</name>
    <dbReference type="NCBI Taxonomy" id="264730"/>
    <lineage>
        <taxon>Bacteria</taxon>
        <taxon>Pseudomonadati</taxon>
        <taxon>Pseudomonadota</taxon>
        <taxon>Gammaproteobacteria</taxon>
        <taxon>Pseudomonadales</taxon>
        <taxon>Pseudomonadaceae</taxon>
        <taxon>Pseudomonas</taxon>
    </lineage>
</organism>
<evidence type="ECO:0000255" key="1">
    <source>
        <dbReference type="HAMAP-Rule" id="MF_00141"/>
    </source>
</evidence>
<accession>Q48FP6</accession>
<dbReference type="EMBL" id="CP000058">
    <property type="protein sequence ID" value="AAZ36156.1"/>
    <property type="molecule type" value="Genomic_DNA"/>
</dbReference>
<dbReference type="RefSeq" id="WP_002554550.1">
    <property type="nucleotide sequence ID" value="NC_005773.3"/>
</dbReference>
<dbReference type="SMR" id="Q48FP6"/>
<dbReference type="KEGG" id="psp:PSPPH_3648"/>
<dbReference type="eggNOG" id="COG0231">
    <property type="taxonomic scope" value="Bacteria"/>
</dbReference>
<dbReference type="HOGENOM" id="CLU_074944_2_1_6"/>
<dbReference type="UniPathway" id="UPA00345"/>
<dbReference type="Proteomes" id="UP000000551">
    <property type="component" value="Chromosome"/>
</dbReference>
<dbReference type="GO" id="GO:0005737">
    <property type="term" value="C:cytoplasm"/>
    <property type="evidence" value="ECO:0007669"/>
    <property type="project" value="UniProtKB-SubCell"/>
</dbReference>
<dbReference type="GO" id="GO:0003746">
    <property type="term" value="F:translation elongation factor activity"/>
    <property type="evidence" value="ECO:0007669"/>
    <property type="project" value="UniProtKB-UniRule"/>
</dbReference>
<dbReference type="GO" id="GO:0043043">
    <property type="term" value="P:peptide biosynthetic process"/>
    <property type="evidence" value="ECO:0007669"/>
    <property type="project" value="InterPro"/>
</dbReference>
<dbReference type="CDD" id="cd04470">
    <property type="entry name" value="S1_EF-P_repeat_1"/>
    <property type="match status" value="1"/>
</dbReference>
<dbReference type="FunFam" id="2.30.30.30:FF:000003">
    <property type="entry name" value="Elongation factor P"/>
    <property type="match status" value="1"/>
</dbReference>
<dbReference type="FunFam" id="2.40.50.140:FF:000004">
    <property type="entry name" value="Elongation factor P"/>
    <property type="match status" value="1"/>
</dbReference>
<dbReference type="Gene3D" id="2.30.30.30">
    <property type="match status" value="1"/>
</dbReference>
<dbReference type="Gene3D" id="2.40.50.140">
    <property type="entry name" value="Nucleic acid-binding proteins"/>
    <property type="match status" value="2"/>
</dbReference>
<dbReference type="HAMAP" id="MF_00141">
    <property type="entry name" value="EF_P"/>
    <property type="match status" value="1"/>
</dbReference>
<dbReference type="InterPro" id="IPR015365">
    <property type="entry name" value="Elong-fact-P_C"/>
</dbReference>
<dbReference type="InterPro" id="IPR012340">
    <property type="entry name" value="NA-bd_OB-fold"/>
</dbReference>
<dbReference type="InterPro" id="IPR014722">
    <property type="entry name" value="Rib_uL2_dom2"/>
</dbReference>
<dbReference type="InterPro" id="IPR020599">
    <property type="entry name" value="Transl_elong_fac_P/YeiP"/>
</dbReference>
<dbReference type="InterPro" id="IPR013185">
    <property type="entry name" value="Transl_elong_KOW-like"/>
</dbReference>
<dbReference type="InterPro" id="IPR001059">
    <property type="entry name" value="Transl_elong_P/YeiP_cen"/>
</dbReference>
<dbReference type="InterPro" id="IPR011768">
    <property type="entry name" value="Transl_elongation_fac_P"/>
</dbReference>
<dbReference type="InterPro" id="IPR008991">
    <property type="entry name" value="Translation_prot_SH3-like_sf"/>
</dbReference>
<dbReference type="NCBIfam" id="NF001810">
    <property type="entry name" value="PRK00529.1"/>
    <property type="match status" value="1"/>
</dbReference>
<dbReference type="PANTHER" id="PTHR30053">
    <property type="entry name" value="ELONGATION FACTOR P"/>
    <property type="match status" value="1"/>
</dbReference>
<dbReference type="PANTHER" id="PTHR30053:SF12">
    <property type="entry name" value="ELONGATION FACTOR P (EF-P) FAMILY PROTEIN"/>
    <property type="match status" value="1"/>
</dbReference>
<dbReference type="Pfam" id="PF01132">
    <property type="entry name" value="EFP"/>
    <property type="match status" value="1"/>
</dbReference>
<dbReference type="Pfam" id="PF08207">
    <property type="entry name" value="EFP_N"/>
    <property type="match status" value="1"/>
</dbReference>
<dbReference type="Pfam" id="PF09285">
    <property type="entry name" value="Elong-fact-P_C"/>
    <property type="match status" value="1"/>
</dbReference>
<dbReference type="PIRSF" id="PIRSF005901">
    <property type="entry name" value="EF-P"/>
    <property type="match status" value="1"/>
</dbReference>
<dbReference type="SMART" id="SM01185">
    <property type="entry name" value="EFP"/>
    <property type="match status" value="1"/>
</dbReference>
<dbReference type="SMART" id="SM00841">
    <property type="entry name" value="Elong-fact-P_C"/>
    <property type="match status" value="1"/>
</dbReference>
<dbReference type="SUPFAM" id="SSF50249">
    <property type="entry name" value="Nucleic acid-binding proteins"/>
    <property type="match status" value="2"/>
</dbReference>
<dbReference type="SUPFAM" id="SSF50104">
    <property type="entry name" value="Translation proteins SH3-like domain"/>
    <property type="match status" value="1"/>
</dbReference>
<protein>
    <recommendedName>
        <fullName evidence="1">Elongation factor P</fullName>
        <shortName evidence="1">EF-P</shortName>
    </recommendedName>
</protein>
<feature type="chain" id="PRO_1000010810" description="Elongation factor P">
    <location>
        <begin position="1"/>
        <end position="189"/>
    </location>
</feature>
<proteinExistence type="inferred from homology"/>
<comment type="function">
    <text evidence="1">Involved in peptide bond synthesis. Stimulates efficient translation and peptide-bond synthesis on native or reconstituted 70S ribosomes in vitro. Probably functions indirectly by altering the affinity of the ribosome for aminoacyl-tRNA, thus increasing their reactivity as acceptors for peptidyl transferase.</text>
</comment>
<comment type="pathway">
    <text evidence="1">Protein biosynthesis; polypeptide chain elongation.</text>
</comment>
<comment type="subcellular location">
    <subcellularLocation>
        <location evidence="1">Cytoplasm</location>
    </subcellularLocation>
</comment>
<comment type="similarity">
    <text evidence="1">Belongs to the elongation factor P family.</text>
</comment>
<keyword id="KW-0963">Cytoplasm</keyword>
<keyword id="KW-0251">Elongation factor</keyword>
<keyword id="KW-0648">Protein biosynthesis</keyword>
<sequence>MKTGKELKPGTVIRLENDPWLVQKAEFTKSGRNSAIMKTKLKNLLTGYKTEIVYSADDKLDDVILDRKEATLSFISGDTYTFMDTTDYTMYELNAEDIESVLPFVEEGMTDVCEAVFFEDRLVSVELPTTIVRQVDYTEGSARGDTSGKVMKPAKLKNGTELSVADFIEIGDMIEIDTREGGSYKGRAK</sequence>
<reference key="1">
    <citation type="journal article" date="2005" name="J. Bacteriol.">
        <title>Whole-genome sequence analysis of Pseudomonas syringae pv. phaseolicola 1448A reveals divergence among pathovars in genes involved in virulence and transposition.</title>
        <authorList>
            <person name="Joardar V."/>
            <person name="Lindeberg M."/>
            <person name="Jackson R.W."/>
            <person name="Selengut J."/>
            <person name="Dodson R."/>
            <person name="Brinkac L.M."/>
            <person name="Daugherty S.C."/>
            <person name="DeBoy R.T."/>
            <person name="Durkin A.S."/>
            <person name="Gwinn Giglio M."/>
            <person name="Madupu R."/>
            <person name="Nelson W.C."/>
            <person name="Rosovitz M.J."/>
            <person name="Sullivan S.A."/>
            <person name="Crabtree J."/>
            <person name="Creasy T."/>
            <person name="Davidsen T.M."/>
            <person name="Haft D.H."/>
            <person name="Zafar N."/>
            <person name="Zhou L."/>
            <person name="Halpin R."/>
            <person name="Holley T."/>
            <person name="Khouri H.M."/>
            <person name="Feldblyum T.V."/>
            <person name="White O."/>
            <person name="Fraser C.M."/>
            <person name="Chatterjee A.K."/>
            <person name="Cartinhour S."/>
            <person name="Schneider D."/>
            <person name="Mansfield J.W."/>
            <person name="Collmer A."/>
            <person name="Buell R."/>
        </authorList>
    </citation>
    <scope>NUCLEOTIDE SEQUENCE [LARGE SCALE GENOMIC DNA]</scope>
    <source>
        <strain>1448A / Race 6</strain>
    </source>
</reference>